<keyword id="KW-0067">ATP-binding</keyword>
<keyword id="KW-0963">Cytoplasm</keyword>
<keyword id="KW-0418">Kinase</keyword>
<keyword id="KW-0520">NAD</keyword>
<keyword id="KW-0521">NADP</keyword>
<keyword id="KW-0547">Nucleotide-binding</keyword>
<keyword id="KW-1185">Reference proteome</keyword>
<keyword id="KW-0808">Transferase</keyword>
<comment type="function">
    <text evidence="1">Involved in the regulation of the intracellular balance of NAD and NADP, and is a key enzyme in the biosynthesis of NADP. Catalyzes specifically the phosphorylation on 2'-hydroxyl of the adenosine moiety of NAD to yield NADP.</text>
</comment>
<comment type="catalytic activity">
    <reaction evidence="1">
        <text>NAD(+) + ATP = ADP + NADP(+) + H(+)</text>
        <dbReference type="Rhea" id="RHEA:18629"/>
        <dbReference type="ChEBI" id="CHEBI:15378"/>
        <dbReference type="ChEBI" id="CHEBI:30616"/>
        <dbReference type="ChEBI" id="CHEBI:57540"/>
        <dbReference type="ChEBI" id="CHEBI:58349"/>
        <dbReference type="ChEBI" id="CHEBI:456216"/>
        <dbReference type="EC" id="2.7.1.23"/>
    </reaction>
</comment>
<comment type="cofactor">
    <cofactor evidence="1">
        <name>a divalent metal cation</name>
        <dbReference type="ChEBI" id="CHEBI:60240"/>
    </cofactor>
</comment>
<comment type="subcellular location">
    <subcellularLocation>
        <location evidence="1">Cytoplasm</location>
    </subcellularLocation>
</comment>
<comment type="similarity">
    <text evidence="1">Belongs to the NAD kinase family.</text>
</comment>
<proteinExistence type="inferred from homology"/>
<name>NADK_ENTFA</name>
<reference key="1">
    <citation type="journal article" date="2003" name="Science">
        <title>Role of mobile DNA in the evolution of vancomycin-resistant Enterococcus faecalis.</title>
        <authorList>
            <person name="Paulsen I.T."/>
            <person name="Banerjei L."/>
            <person name="Myers G.S.A."/>
            <person name="Nelson K.E."/>
            <person name="Seshadri R."/>
            <person name="Read T.D."/>
            <person name="Fouts D.E."/>
            <person name="Eisen J.A."/>
            <person name="Gill S.R."/>
            <person name="Heidelberg J.F."/>
            <person name="Tettelin H."/>
            <person name="Dodson R.J."/>
            <person name="Umayam L.A."/>
            <person name="Brinkac L.M."/>
            <person name="Beanan M.J."/>
            <person name="Daugherty S.C."/>
            <person name="DeBoy R.T."/>
            <person name="Durkin S.A."/>
            <person name="Kolonay J.F."/>
            <person name="Madupu R."/>
            <person name="Nelson W.C."/>
            <person name="Vamathevan J.J."/>
            <person name="Tran B."/>
            <person name="Upton J."/>
            <person name="Hansen T."/>
            <person name="Shetty J."/>
            <person name="Khouri H.M."/>
            <person name="Utterback T.R."/>
            <person name="Radune D."/>
            <person name="Ketchum K.A."/>
            <person name="Dougherty B.A."/>
            <person name="Fraser C.M."/>
        </authorList>
    </citation>
    <scope>NUCLEOTIDE SEQUENCE [LARGE SCALE GENOMIC DNA]</scope>
    <source>
        <strain>ATCC 700802 / V583</strain>
    </source>
</reference>
<evidence type="ECO:0000255" key="1">
    <source>
        <dbReference type="HAMAP-Rule" id="MF_00361"/>
    </source>
</evidence>
<gene>
    <name evidence="1" type="primary">nadK</name>
    <name type="ordered locus">EF_2670</name>
</gene>
<sequence>MKVAIVHNSEEKSKQVTKQLTTLLEQNQIQIDNRQPELVISVGGDGTLLSAFHRFNHLLNEVSFLGVHTGHLGFYTDWRDYELKELVESLCIHREKSTSYPLLDVRIRFRDGKPDKHFLALNESTIKRGNRTMVGDVFIKDELFERFRGDGLSISTPTGSTAYNKSIGGAVLHPSINAFQLTEIASLNNRVFRTLGSPIVIAHTEWLEIKLQESDDYFVTVDQLDIYQENIASVCYRIADERIHFASYRHMHFWHRVKDAFIGED</sequence>
<protein>
    <recommendedName>
        <fullName evidence="1">NAD kinase</fullName>
        <ecNumber evidence="1">2.7.1.23</ecNumber>
    </recommendedName>
    <alternativeName>
        <fullName evidence="1">ATP-dependent NAD kinase</fullName>
    </alternativeName>
</protein>
<accession>Q830V0</accession>
<organism>
    <name type="scientific">Enterococcus faecalis (strain ATCC 700802 / V583)</name>
    <dbReference type="NCBI Taxonomy" id="226185"/>
    <lineage>
        <taxon>Bacteria</taxon>
        <taxon>Bacillati</taxon>
        <taxon>Bacillota</taxon>
        <taxon>Bacilli</taxon>
        <taxon>Lactobacillales</taxon>
        <taxon>Enterococcaceae</taxon>
        <taxon>Enterococcus</taxon>
    </lineage>
</organism>
<feature type="chain" id="PRO_0000120619" description="NAD kinase">
    <location>
        <begin position="1"/>
        <end position="265"/>
    </location>
</feature>
<feature type="active site" description="Proton acceptor" evidence="1">
    <location>
        <position position="45"/>
    </location>
</feature>
<feature type="binding site" evidence="1">
    <location>
        <begin position="45"/>
        <end position="46"/>
    </location>
    <ligand>
        <name>NAD(+)</name>
        <dbReference type="ChEBI" id="CHEBI:57540"/>
    </ligand>
</feature>
<feature type="binding site" evidence="1">
    <location>
        <begin position="122"/>
        <end position="123"/>
    </location>
    <ligand>
        <name>NAD(+)</name>
        <dbReference type="ChEBI" id="CHEBI:57540"/>
    </ligand>
</feature>
<feature type="binding site" evidence="1">
    <location>
        <position position="148"/>
    </location>
    <ligand>
        <name>NAD(+)</name>
        <dbReference type="ChEBI" id="CHEBI:57540"/>
    </ligand>
</feature>
<feature type="binding site" evidence="1">
    <location>
        <position position="150"/>
    </location>
    <ligand>
        <name>NAD(+)</name>
        <dbReference type="ChEBI" id="CHEBI:57540"/>
    </ligand>
</feature>
<feature type="binding site" evidence="1">
    <location>
        <begin position="161"/>
        <end position="166"/>
    </location>
    <ligand>
        <name>NAD(+)</name>
        <dbReference type="ChEBI" id="CHEBI:57540"/>
    </ligand>
</feature>
<feature type="binding site" evidence="1">
    <location>
        <position position="185"/>
    </location>
    <ligand>
        <name>NAD(+)</name>
        <dbReference type="ChEBI" id="CHEBI:57540"/>
    </ligand>
</feature>
<feature type="binding site" evidence="1">
    <location>
        <position position="223"/>
    </location>
    <ligand>
        <name>NAD(+)</name>
        <dbReference type="ChEBI" id="CHEBI:57540"/>
    </ligand>
</feature>
<dbReference type="EC" id="2.7.1.23" evidence="1"/>
<dbReference type="EMBL" id="AE016830">
    <property type="protein sequence ID" value="AAO82376.1"/>
    <property type="molecule type" value="Genomic_DNA"/>
</dbReference>
<dbReference type="RefSeq" id="NP_816306.1">
    <property type="nucleotide sequence ID" value="NC_004668.1"/>
</dbReference>
<dbReference type="RefSeq" id="WP_002356486.1">
    <property type="nucleotide sequence ID" value="NZ_KE136528.1"/>
</dbReference>
<dbReference type="SMR" id="Q830V0"/>
<dbReference type="STRING" id="226185.EF_2670"/>
<dbReference type="EnsemblBacteria" id="AAO82376">
    <property type="protein sequence ID" value="AAO82376"/>
    <property type="gene ID" value="EF_2670"/>
</dbReference>
<dbReference type="KEGG" id="efa:EF2670"/>
<dbReference type="PATRIC" id="fig|226185.45.peg.891"/>
<dbReference type="eggNOG" id="COG0061">
    <property type="taxonomic scope" value="Bacteria"/>
</dbReference>
<dbReference type="HOGENOM" id="CLU_008831_0_3_9"/>
<dbReference type="Proteomes" id="UP000001415">
    <property type="component" value="Chromosome"/>
</dbReference>
<dbReference type="GO" id="GO:0005737">
    <property type="term" value="C:cytoplasm"/>
    <property type="evidence" value="ECO:0007669"/>
    <property type="project" value="UniProtKB-SubCell"/>
</dbReference>
<dbReference type="GO" id="GO:0005524">
    <property type="term" value="F:ATP binding"/>
    <property type="evidence" value="ECO:0007669"/>
    <property type="project" value="UniProtKB-KW"/>
</dbReference>
<dbReference type="GO" id="GO:0046872">
    <property type="term" value="F:metal ion binding"/>
    <property type="evidence" value="ECO:0007669"/>
    <property type="project" value="UniProtKB-UniRule"/>
</dbReference>
<dbReference type="GO" id="GO:0051287">
    <property type="term" value="F:NAD binding"/>
    <property type="evidence" value="ECO:0007669"/>
    <property type="project" value="UniProtKB-ARBA"/>
</dbReference>
<dbReference type="GO" id="GO:0003951">
    <property type="term" value="F:NAD+ kinase activity"/>
    <property type="evidence" value="ECO:0007669"/>
    <property type="project" value="UniProtKB-UniRule"/>
</dbReference>
<dbReference type="GO" id="GO:0019674">
    <property type="term" value="P:NAD metabolic process"/>
    <property type="evidence" value="ECO:0007669"/>
    <property type="project" value="InterPro"/>
</dbReference>
<dbReference type="GO" id="GO:0006741">
    <property type="term" value="P:NADP biosynthetic process"/>
    <property type="evidence" value="ECO:0007669"/>
    <property type="project" value="UniProtKB-UniRule"/>
</dbReference>
<dbReference type="Gene3D" id="3.40.50.10330">
    <property type="entry name" value="Probable inorganic polyphosphate/atp-NAD kinase, domain 1"/>
    <property type="match status" value="1"/>
</dbReference>
<dbReference type="Gene3D" id="2.60.200.30">
    <property type="entry name" value="Probable inorganic polyphosphate/atp-NAD kinase, domain 2"/>
    <property type="match status" value="1"/>
</dbReference>
<dbReference type="HAMAP" id="MF_00361">
    <property type="entry name" value="NAD_kinase"/>
    <property type="match status" value="1"/>
</dbReference>
<dbReference type="InterPro" id="IPR017438">
    <property type="entry name" value="ATP-NAD_kinase_N"/>
</dbReference>
<dbReference type="InterPro" id="IPR017437">
    <property type="entry name" value="ATP-NAD_kinase_PpnK-typ_C"/>
</dbReference>
<dbReference type="InterPro" id="IPR016064">
    <property type="entry name" value="NAD/diacylglycerol_kinase_sf"/>
</dbReference>
<dbReference type="InterPro" id="IPR002504">
    <property type="entry name" value="NADK"/>
</dbReference>
<dbReference type="NCBIfam" id="NF003424">
    <property type="entry name" value="PRK04885.1"/>
    <property type="match status" value="1"/>
</dbReference>
<dbReference type="PANTHER" id="PTHR20275">
    <property type="entry name" value="NAD KINASE"/>
    <property type="match status" value="1"/>
</dbReference>
<dbReference type="PANTHER" id="PTHR20275:SF0">
    <property type="entry name" value="NAD KINASE"/>
    <property type="match status" value="1"/>
</dbReference>
<dbReference type="Pfam" id="PF01513">
    <property type="entry name" value="NAD_kinase"/>
    <property type="match status" value="1"/>
</dbReference>
<dbReference type="Pfam" id="PF20143">
    <property type="entry name" value="NAD_kinase_C"/>
    <property type="match status" value="1"/>
</dbReference>
<dbReference type="SUPFAM" id="SSF111331">
    <property type="entry name" value="NAD kinase/diacylglycerol kinase-like"/>
    <property type="match status" value="1"/>
</dbReference>